<proteinExistence type="inferred from homology"/>
<sequence length="1770" mass="188886">MAQQQQQQQQQQHLQHPHQNTNSNNQLQQQQQQLQLQLQLQLQEQQEQQQQQLQLQQYNNNFYSQNYNMEEYERRKRREREKIERQQGIQIDDRETALFSEPRRLTEGDAEITAALGEFGDARVYINQSTVGISRHAPGAGNPRLQAPPPPKTLGHSHSPSSSSAAGSGSGSALPGQSQSQQQQQKQHYQQQQQQQRPPGYLKQADNKPPYNGRGGYPGQPMKNDIPSSSGMAPPRGPPRSGSGSISNSNSNSSSATNNATGGAAGTTPLGPPLSTQMPNGREKSFLGPPAPALHNGAGLFVPPAASKRPGGGSGAGLQPPPPEKDITKMISEMTNSFRVTAPLTSIAATPHAPTRENYNLNGPNTNKYAFGPIGSPPIGSQPSSLMAPLFAPIAPIASPITSLLTTPPHASQGSLGGASPVAPLQQLPPTPPKAAAALSPTAAAKPLKTEKNHTLEKQDSCLENDLELSESEDEQRKKESRSAGNSSNSSESDSSESGSESSSKGDHQQQHHHHNHHHQQQQQQLQQQQQQQLLQQKQQHQQILQQQQRQLTANGSKKKYSHSIIAGGGSTISGLLTSSGFGSGGAGNGGCSTASSGGGGGGSGSGGGSGSSSGIGTMSSGSSSNKTPSPTESNKWTLSRFFPKPANQTSSESVSPGNVSMKVPGILPGGAQIIPESIEVTTAIVKNEKIHDDHMDMDEVEEEDEDEEQLQQQQQLRYGAGLSVTPVAVAVKKEALDGVGEMGGLPAIPKNQIKREAEALHSAARLSDSGTSGSGSTSSSSSSSDSAPGEVVPMPGPGETLQLPGVPAAITTVMRVHPTLMQKAPPNSVTLTPILPLPASPKQRQKKPRKKKPATSAPILDSSDDDDPPAAKHALELSAAAAAAAQAQATATVPPLAVKKGRGRPRKQQQSGGSGNLSSASAGSSSQTKGPTLTAAKKPLVKGPAMANSRKRDHSSQSSSNGNTPTKKLAMGTGTGTGTAMAVPMTVIPSGPANASAVAAASSSSDEDSSSSTGSTGSKSSSSSSSSDDTETTQNTKCRIVKLNKTGAVPPLARLGAVASAGAGAGAGASGSSSPSSSSSEPEDHLAMSTVSALPMAQQLMQPYKPRAVSQHSQQLSSSECSSSSGSSTSGDEDEAKREKERERKRKSDKNKISTLTRIFNPKEGGAKKQGQVVIMDQSEEQQQVKVGDSSSQPVPVQNAAIAKLRMTPTQQQQQLGAGLASPARTTTPHLTSLICKIDLSKLSRERIMRLKKLTPSQQNGHLTPKDLVTIQTQGPSQPVQGHLLPAKVKHEHPHPVKPEPELDAGYESKFKPGNVKQEFQLKQERDRERERERDRDRERERERERDREREREQPTGGRRRKRSSSSSSSPYKEKKRKKEKSDHLQISKDQLLPVPVLLPSNNHERISCHERLSFDKLQLLHEDAAAVAAAAAAVSAPNGSPSKKLLVMSPLPPPPTAVVVPPAVVAPSTCSEAVQTTPPSAAATATAATSTTGTSTAPPAPVTRLIYRSYFDREEEPHSDDHRKNNQFLVEAVNRKHAADSERDSFNQVTLYLEAVVYFLLTADSMERSSSEQATWTIYKDTLSLIKFISSKFRPYQQSTNGQHETHNKVAILSLRCQSLISLKLYKLRRTNCRTVINSLTEFFRTGRGDIVNGNTPSSISPSNSVGSQGSGSNTPPGKIVPQEIHTQLSKQNEYLTYVNSAHELWDQADRLVRTGNHIDFFRELDHENGPLTLHSTMPEVFRYVQAGLKTLRDAVSHPTQQTLHQSH</sequence>
<comment type="function">
    <text evidence="1">Has a role in transcriptional regulation. Acts in parallel with the Ras/MAPK and the PI3K/PKB pathways in the control of cell identity and cellular growth. Essential for regulation of the cytoskeleton and cell growth but not for cell proliferation or growth rate. Required specifically for the microtubule-based basal transport of lipid droplets. Plays a partially redundant function downstream of Raf in cell fate specification in the developing eye. Pair-rule protein that regulates embryonic cellularization, gastrulation and segmentation (By similarity).</text>
</comment>
<comment type="subcellular location">
    <subcellularLocation>
        <location evidence="1">Nucleus</location>
    </subcellularLocation>
</comment>
<comment type="similarity">
    <text evidence="2">Belongs to the AF4 family.</text>
</comment>
<name>AFFL_DROPS</name>
<reference evidence="4" key="1">
    <citation type="journal article" date="2005" name="Genome Res.">
        <title>Comparative genome sequencing of Drosophila pseudoobscura: chromosomal, gene, and cis-element evolution.</title>
        <authorList>
            <person name="Richards S."/>
            <person name="Liu Y."/>
            <person name="Bettencourt B.R."/>
            <person name="Hradecky P."/>
            <person name="Letovsky S."/>
            <person name="Nielsen R."/>
            <person name="Thornton K."/>
            <person name="Hubisz M.J."/>
            <person name="Chen R."/>
            <person name="Meisel R.P."/>
            <person name="Couronne O."/>
            <person name="Hua S."/>
            <person name="Smith M.A."/>
            <person name="Zhang P."/>
            <person name="Liu J."/>
            <person name="Bussemaker H.J."/>
            <person name="van Batenburg M.F."/>
            <person name="Howells S.L."/>
            <person name="Scherer S.E."/>
            <person name="Sodergren E."/>
            <person name="Matthews B.B."/>
            <person name="Crosby M.A."/>
            <person name="Schroeder A.J."/>
            <person name="Ortiz-Barrientos D."/>
            <person name="Rives C.M."/>
            <person name="Metzker M.L."/>
            <person name="Muzny D.M."/>
            <person name="Scott G."/>
            <person name="Steffen D."/>
            <person name="Wheeler D.A."/>
            <person name="Worley K.C."/>
            <person name="Havlak P."/>
            <person name="Durbin K.J."/>
            <person name="Egan A."/>
            <person name="Gill R."/>
            <person name="Hume J."/>
            <person name="Morgan M.B."/>
            <person name="Miner G."/>
            <person name="Hamilton C."/>
            <person name="Huang Y."/>
            <person name="Waldron L."/>
            <person name="Verduzco D."/>
            <person name="Clerc-Blankenburg K.P."/>
            <person name="Dubchak I."/>
            <person name="Noor M.A.F."/>
            <person name="Anderson W."/>
            <person name="White K.P."/>
            <person name="Clark A.G."/>
            <person name="Schaeffer S.W."/>
            <person name="Gelbart W.M."/>
            <person name="Weinstock G.M."/>
            <person name="Gibbs R.A."/>
        </authorList>
    </citation>
    <scope>NUCLEOTIDE SEQUENCE [LARGE SCALE GENOMIC DNA]</scope>
    <source>
        <strain>MV2-25 / Tucson 14011-0121.94</strain>
    </source>
</reference>
<protein>
    <recommendedName>
        <fullName evidence="1">AF4/FMR2 family member lilli</fullName>
    </recommendedName>
    <alternativeName>
        <fullName evidence="1">Protein lilliputian</fullName>
    </alternativeName>
</protein>
<organism>
    <name type="scientific">Drosophila pseudoobscura pseudoobscura</name>
    <name type="common">Fruit fly</name>
    <dbReference type="NCBI Taxonomy" id="46245"/>
    <lineage>
        <taxon>Eukaryota</taxon>
        <taxon>Metazoa</taxon>
        <taxon>Ecdysozoa</taxon>
        <taxon>Arthropoda</taxon>
        <taxon>Hexapoda</taxon>
        <taxon>Insecta</taxon>
        <taxon>Pterygota</taxon>
        <taxon>Neoptera</taxon>
        <taxon>Endopterygota</taxon>
        <taxon>Diptera</taxon>
        <taxon>Brachycera</taxon>
        <taxon>Muscomorpha</taxon>
        <taxon>Ephydroidea</taxon>
        <taxon>Drosophilidae</taxon>
        <taxon>Drosophila</taxon>
        <taxon>Sophophora</taxon>
    </lineage>
</organism>
<gene>
    <name evidence="1" type="primary">lilli</name>
    <name type="ORF">GA21343</name>
</gene>
<accession>Q29KG4</accession>
<feature type="chain" id="PRO_0000394677" description="AF4/FMR2 family member lilli">
    <location>
        <begin position="1"/>
        <end position="1770"/>
    </location>
</feature>
<feature type="DNA-binding region" description="A.T hook" evidence="2">
    <location>
        <begin position="900"/>
        <end position="912"/>
    </location>
</feature>
<feature type="region of interest" description="Disordered" evidence="3">
    <location>
        <begin position="1"/>
        <end position="28"/>
    </location>
</feature>
<feature type="region of interest" description="Disordered" evidence="3">
    <location>
        <begin position="134"/>
        <end position="327"/>
    </location>
</feature>
<feature type="region of interest" description="Disordered" evidence="3">
    <location>
        <begin position="402"/>
        <end position="660"/>
    </location>
</feature>
<feature type="region of interest" description="Disordered" evidence="3">
    <location>
        <begin position="761"/>
        <end position="805"/>
    </location>
</feature>
<feature type="region of interest" description="Disordered" evidence="3">
    <location>
        <begin position="822"/>
        <end position="1173"/>
    </location>
</feature>
<feature type="region of interest" description="Disordered" evidence="3">
    <location>
        <begin position="1291"/>
        <end position="1390"/>
    </location>
</feature>
<feature type="region of interest" description="Disordered" evidence="3">
    <location>
        <begin position="1483"/>
        <end position="1502"/>
    </location>
</feature>
<feature type="region of interest" description="Disordered" evidence="3">
    <location>
        <begin position="1656"/>
        <end position="1683"/>
    </location>
</feature>
<feature type="compositionally biased region" description="Low complexity" evidence="3">
    <location>
        <begin position="1"/>
        <end position="19"/>
    </location>
</feature>
<feature type="compositionally biased region" description="Low complexity" evidence="3">
    <location>
        <begin position="154"/>
        <end position="204"/>
    </location>
</feature>
<feature type="compositionally biased region" description="Low complexity" evidence="3">
    <location>
        <begin position="227"/>
        <end position="269"/>
    </location>
</feature>
<feature type="compositionally biased region" description="Polar residues" evidence="3">
    <location>
        <begin position="402"/>
        <end position="414"/>
    </location>
</feature>
<feature type="compositionally biased region" description="Low complexity" evidence="3">
    <location>
        <begin position="434"/>
        <end position="447"/>
    </location>
</feature>
<feature type="compositionally biased region" description="Basic and acidic residues" evidence="3">
    <location>
        <begin position="448"/>
        <end position="461"/>
    </location>
</feature>
<feature type="compositionally biased region" description="Acidic residues" evidence="3">
    <location>
        <begin position="463"/>
        <end position="474"/>
    </location>
</feature>
<feature type="compositionally biased region" description="Low complexity" evidence="3">
    <location>
        <begin position="483"/>
        <end position="503"/>
    </location>
</feature>
<feature type="compositionally biased region" description="Basic residues" evidence="3">
    <location>
        <begin position="511"/>
        <end position="520"/>
    </location>
</feature>
<feature type="compositionally biased region" description="Low complexity" evidence="3">
    <location>
        <begin position="521"/>
        <end position="552"/>
    </location>
</feature>
<feature type="compositionally biased region" description="Gly residues" evidence="3">
    <location>
        <begin position="582"/>
        <end position="614"/>
    </location>
</feature>
<feature type="compositionally biased region" description="Low complexity" evidence="3">
    <location>
        <begin position="615"/>
        <end position="625"/>
    </location>
</feature>
<feature type="compositionally biased region" description="Polar residues" evidence="3">
    <location>
        <begin position="626"/>
        <end position="638"/>
    </location>
</feature>
<feature type="compositionally biased region" description="Polar residues" evidence="3">
    <location>
        <begin position="647"/>
        <end position="659"/>
    </location>
</feature>
<feature type="compositionally biased region" description="Low complexity" evidence="3">
    <location>
        <begin position="768"/>
        <end position="800"/>
    </location>
</feature>
<feature type="compositionally biased region" description="Basic residues" evidence="3">
    <location>
        <begin position="844"/>
        <end position="854"/>
    </location>
</feature>
<feature type="compositionally biased region" description="Low complexity" evidence="3">
    <location>
        <begin position="880"/>
        <end position="893"/>
    </location>
</feature>
<feature type="compositionally biased region" description="Low complexity" evidence="3">
    <location>
        <begin position="909"/>
        <end position="928"/>
    </location>
</feature>
<feature type="compositionally biased region" description="Low complexity" evidence="3">
    <location>
        <begin position="994"/>
        <end position="1028"/>
    </location>
</feature>
<feature type="compositionally biased region" description="Low complexity" evidence="3">
    <location>
        <begin position="1071"/>
        <end position="1081"/>
    </location>
</feature>
<feature type="compositionally biased region" description="Low complexity" evidence="3">
    <location>
        <begin position="1111"/>
        <end position="1131"/>
    </location>
</feature>
<feature type="compositionally biased region" description="Basic and acidic residues" evidence="3">
    <location>
        <begin position="1295"/>
        <end position="1312"/>
    </location>
</feature>
<feature type="compositionally biased region" description="Basic and acidic residues" evidence="3">
    <location>
        <begin position="1321"/>
        <end position="1355"/>
    </location>
</feature>
<feature type="compositionally biased region" description="Low complexity" evidence="3">
    <location>
        <begin position="1483"/>
        <end position="1499"/>
    </location>
</feature>
<feature type="compositionally biased region" description="Low complexity" evidence="3">
    <location>
        <begin position="1656"/>
        <end position="1676"/>
    </location>
</feature>
<feature type="modified residue" description="Phosphoserine" evidence="1">
    <location>
        <position position="470"/>
    </location>
</feature>
<feature type="modified residue" description="Phosphoserine" evidence="1">
    <location>
        <position position="472"/>
    </location>
</feature>
<feature type="modified residue" description="Phosphoserine" evidence="1">
    <location>
        <position position="863"/>
    </location>
</feature>
<feature type="modified residue" description="Phosphoserine" evidence="1">
    <location>
        <position position="864"/>
    </location>
</feature>
<feature type="modified residue" description="Phosphoserine" evidence="1">
    <location>
        <position position="920"/>
    </location>
</feature>
<feature type="modified residue" description="Phosphoserine" evidence="1">
    <location>
        <position position="922"/>
    </location>
</feature>
<feature type="modified residue" description="Phosphoserine" evidence="1">
    <location>
        <position position="1442"/>
    </location>
</feature>
<keyword id="KW-0217">Developmental protein</keyword>
<keyword id="KW-0238">DNA-binding</keyword>
<keyword id="KW-0539">Nucleus</keyword>
<keyword id="KW-0562">Pair-rule protein</keyword>
<keyword id="KW-0597">Phosphoprotein</keyword>
<keyword id="KW-1185">Reference proteome</keyword>
<keyword id="KW-0804">Transcription</keyword>
<keyword id="KW-0805">Transcription regulation</keyword>
<dbReference type="EMBL" id="CH379061">
    <property type="protein sequence ID" value="EAL33211.2"/>
    <property type="molecule type" value="Genomic_DNA"/>
</dbReference>
<dbReference type="SMR" id="Q29KG4"/>
<dbReference type="FunCoup" id="Q29KG4">
    <property type="interactions" value="266"/>
</dbReference>
<dbReference type="STRING" id="46245.Q29KG4"/>
<dbReference type="eggNOG" id="ENOG502QR32">
    <property type="taxonomic scope" value="Eukaryota"/>
</dbReference>
<dbReference type="HOGENOM" id="CLU_241798_0_0_1"/>
<dbReference type="InParanoid" id="Q29KG4"/>
<dbReference type="OMA" id="NMEATWT"/>
<dbReference type="ChiTaRS" id="lilli">
    <property type="organism name" value="fly"/>
</dbReference>
<dbReference type="Proteomes" id="UP000001819">
    <property type="component" value="Unplaced"/>
</dbReference>
<dbReference type="GO" id="GO:0005634">
    <property type="term" value="C:nucleus"/>
    <property type="evidence" value="ECO:0000250"/>
    <property type="project" value="UniProtKB"/>
</dbReference>
<dbReference type="GO" id="GO:0032783">
    <property type="term" value="C:super elongation complex"/>
    <property type="evidence" value="ECO:0007669"/>
    <property type="project" value="TreeGrafter"/>
</dbReference>
<dbReference type="GO" id="GO:0003677">
    <property type="term" value="F:DNA binding"/>
    <property type="evidence" value="ECO:0007669"/>
    <property type="project" value="UniProtKB-KW"/>
</dbReference>
<dbReference type="GO" id="GO:0003712">
    <property type="term" value="F:transcription coregulator activity"/>
    <property type="evidence" value="ECO:0000250"/>
    <property type="project" value="UniProtKB"/>
</dbReference>
<dbReference type="GO" id="GO:0007366">
    <property type="term" value="P:periodic partitioning by pair rule gene"/>
    <property type="evidence" value="ECO:0000250"/>
    <property type="project" value="UniProtKB"/>
</dbReference>
<dbReference type="GO" id="GO:0051493">
    <property type="term" value="P:regulation of cytoskeleton organization"/>
    <property type="evidence" value="ECO:0000250"/>
    <property type="project" value="UniProtKB"/>
</dbReference>
<dbReference type="GO" id="GO:0006355">
    <property type="term" value="P:regulation of DNA-templated transcription"/>
    <property type="evidence" value="ECO:0000250"/>
    <property type="project" value="UniProtKB"/>
</dbReference>
<dbReference type="GO" id="GO:0032368">
    <property type="term" value="P:regulation of lipid transport"/>
    <property type="evidence" value="ECO:0000250"/>
    <property type="project" value="UniProtKB"/>
</dbReference>
<dbReference type="InterPro" id="IPR007797">
    <property type="entry name" value="AF4/FMR2"/>
</dbReference>
<dbReference type="InterPro" id="IPR043640">
    <property type="entry name" value="AF4/FMR2_CHD"/>
</dbReference>
<dbReference type="InterPro" id="IPR000637">
    <property type="entry name" value="HMGI/Y_DNA-bd_CS"/>
</dbReference>
<dbReference type="PANTHER" id="PTHR10528">
    <property type="entry name" value="AF4/FMR2 FAMILY MEMBER"/>
    <property type="match status" value="1"/>
</dbReference>
<dbReference type="PANTHER" id="PTHR10528:SF17">
    <property type="entry name" value="AF4_FMR2 FAMILY MEMBER LILLI"/>
    <property type="match status" value="1"/>
</dbReference>
<dbReference type="Pfam" id="PF18876">
    <property type="entry name" value="AFF4_CHD"/>
    <property type="match status" value="1"/>
</dbReference>
<dbReference type="PROSITE" id="PS00354">
    <property type="entry name" value="HMGI_Y"/>
    <property type="match status" value="1"/>
</dbReference>
<evidence type="ECO:0000250" key="1">
    <source>
        <dbReference type="UniProtKB" id="Q9VQI9"/>
    </source>
</evidence>
<evidence type="ECO:0000255" key="2"/>
<evidence type="ECO:0000256" key="3">
    <source>
        <dbReference type="SAM" id="MobiDB-lite"/>
    </source>
</evidence>
<evidence type="ECO:0000312" key="4">
    <source>
        <dbReference type="EMBL" id="EAL33211.2"/>
    </source>
</evidence>